<protein>
    <recommendedName>
        <fullName evidence="4">ATP synthase subunit b'</fullName>
    </recommendedName>
    <alternativeName>
        <fullName>ATP synthase F(0) sector subunit b'</fullName>
    </alternativeName>
    <alternativeName>
        <fullName>ATPase subunit II</fullName>
    </alternativeName>
    <alternativeName>
        <fullName>F-type ATPase subunit b'</fullName>
        <shortName>F-ATPase subunit b'</shortName>
    </alternativeName>
</protein>
<gene>
    <name evidence="5" type="primary">atpF2</name>
    <name type="synonym">atpG</name>
    <name evidence="4" type="synonym">atpX</name>
</gene>
<accession>O05332</accession>
<sequence length="186" mass="19065">MANETNAVEAAAAVAGHAAEAAEKGGMPQLDFSTFPNQIFWLLLALGAIYWLLKNIAIPRIAAILADRAGTISGDLAAAEQYKLKAKDAEAAYAKALADARAQAQKIIAETRAVIQKDLDAATAKADADIAARVAQSEVKIAEIRAGALEAVQIVATDTATAIVTALGGKADMGALNAAVGQRVKG</sequence>
<proteinExistence type="evidence at protein level"/>
<name>ATPF2_RHOCA</name>
<reference key="1">
    <citation type="journal article" date="1998" name="Arch. Microbiol.">
        <title>The atpIBEXF operon coding for the Fo sector of the ATP synthase from the purple nonsulfur photosynthetic bacterium Rhodobacter capsulatus.</title>
        <authorList>
            <person name="Borghese R."/>
            <person name="Turina P."/>
            <person name="Lambertini L."/>
            <person name="Melandri B.A."/>
        </authorList>
    </citation>
    <scope>NUCLEOTIDE SEQUENCE [GENOMIC DNA]</scope>
    <source>
        <strain>ATCC 33303 / B10</strain>
    </source>
</reference>
<reference key="2">
    <citation type="journal article" date="1988" name="Biochim. Biophys. Acta">
        <title>Purification of the H+-ATPase from Rhodobacter capsulatus, identification of the F1F0 components and reconstitution of the active enzyme.</title>
        <authorList>
            <person name="Gabellini N."/>
            <person name="Gao Z."/>
            <person name="Eckerskorn C."/>
            <person name="Lottspeich F."/>
            <person name="Oesterhelt D."/>
        </authorList>
    </citation>
    <scope>PROTEIN SEQUENCE OF 2-20</scope>
    <scope>SUBUNIT</scope>
    <scope>SUBCELLULAR LOCATION</scope>
    <source>
        <strain>GA</strain>
    </source>
</reference>
<comment type="function">
    <text evidence="1">F(1)F(0) ATP synthase produces ATP from ADP in the presence of a proton or sodium gradient. F-type ATPases consist of two structural domains, F(1) containing the extramembraneous catalytic core and F(0) containing the membrane proton channel, linked together by a central stalk and a peripheral stalk. During catalysis, ATP synthesis in the catalytic domain of F(1) is coupled via a rotary mechanism of the central stalk subunits to proton translocation (By similarity).</text>
</comment>
<comment type="function">
    <text evidence="1">Component of the F(0) channel, it forms part of the peripheral stalk, linking F(1) to F(0). The b'-subunit is a diverged and duplicated form of b found in plants and photosynthetic bacteria (By similarity).</text>
</comment>
<comment type="subunit">
    <text evidence="3">F-type ATPases have 2 components, F(1) - the catalytic core - and F(0) - the membrane proton channel. F(1) has five subunits: alpha(3), beta(3), gamma(1), delta(1), epsilon(1). F(0) has four main subunits: a(1), b(1), b'(1) and c(10-14). The alpha and beta chains form an alternating ring which encloses part of the gamma chain. F(1) is attached to F(0) by a central stalk formed by the gamma and epsilon chains, while a peripheral stalk is formed by the delta, b and b' chains.</text>
</comment>
<comment type="subcellular location">
    <subcellularLocation>
        <location evidence="3">Cellular chromatophore membrane</location>
        <topology evidence="3">Single-pass membrane protein</topology>
    </subcellularLocation>
</comment>
<comment type="similarity">
    <text evidence="5">Belongs to the ATPase B chain family.</text>
</comment>
<organism>
    <name type="scientific">Rhodobacter capsulatus</name>
    <name type="common">Rhodopseudomonas capsulata</name>
    <dbReference type="NCBI Taxonomy" id="1061"/>
    <lineage>
        <taxon>Bacteria</taxon>
        <taxon>Pseudomonadati</taxon>
        <taxon>Pseudomonadota</taxon>
        <taxon>Alphaproteobacteria</taxon>
        <taxon>Rhodobacterales</taxon>
        <taxon>Rhodobacter group</taxon>
        <taxon>Rhodobacter</taxon>
    </lineage>
</organism>
<keyword id="KW-0066">ATP synthesis</keyword>
<keyword id="KW-0138">CF(0)</keyword>
<keyword id="KW-0903">Direct protein sequencing</keyword>
<keyword id="KW-0375">Hydrogen ion transport</keyword>
<keyword id="KW-0406">Ion transport</keyword>
<keyword id="KW-0472">Membrane</keyword>
<keyword id="KW-0812">Transmembrane</keyword>
<keyword id="KW-1133">Transmembrane helix</keyword>
<keyword id="KW-0813">Transport</keyword>
<evidence type="ECO:0000250" key="1"/>
<evidence type="ECO:0000255" key="2"/>
<evidence type="ECO:0000269" key="3">
    <source ref="2"/>
</evidence>
<evidence type="ECO:0000303" key="4">
    <source>
    </source>
</evidence>
<evidence type="ECO:0000305" key="5"/>
<dbReference type="EMBL" id="Y12313">
    <property type="protein sequence ID" value="CAA72983.1"/>
    <property type="molecule type" value="Genomic_DNA"/>
</dbReference>
<dbReference type="RefSeq" id="WP_013066487.1">
    <property type="nucleotide sequence ID" value="NZ_VIBE01000017.1"/>
</dbReference>
<dbReference type="SMR" id="O05332"/>
<dbReference type="OMA" id="NQIFWLV"/>
<dbReference type="GO" id="GO:0005886">
    <property type="term" value="C:plasma membrane"/>
    <property type="evidence" value="ECO:0007669"/>
    <property type="project" value="UniProtKB-UniRule"/>
</dbReference>
<dbReference type="GO" id="GO:0042717">
    <property type="term" value="C:plasma membrane-derived chromatophore membrane"/>
    <property type="evidence" value="ECO:0007669"/>
    <property type="project" value="UniProtKB-SubCell"/>
</dbReference>
<dbReference type="GO" id="GO:0045259">
    <property type="term" value="C:proton-transporting ATP synthase complex"/>
    <property type="evidence" value="ECO:0007669"/>
    <property type="project" value="UniProtKB-KW"/>
</dbReference>
<dbReference type="GO" id="GO:0046933">
    <property type="term" value="F:proton-transporting ATP synthase activity, rotational mechanism"/>
    <property type="evidence" value="ECO:0007669"/>
    <property type="project" value="UniProtKB-UniRule"/>
</dbReference>
<dbReference type="GO" id="GO:0046961">
    <property type="term" value="F:proton-transporting ATPase activity, rotational mechanism"/>
    <property type="evidence" value="ECO:0007669"/>
    <property type="project" value="TreeGrafter"/>
</dbReference>
<dbReference type="CDD" id="cd06503">
    <property type="entry name" value="ATP-synt_Fo_b"/>
    <property type="match status" value="1"/>
</dbReference>
<dbReference type="Gene3D" id="6.10.250.1580">
    <property type="match status" value="1"/>
</dbReference>
<dbReference type="HAMAP" id="MF_01398">
    <property type="entry name" value="ATP_synth_b_bprime"/>
    <property type="match status" value="1"/>
</dbReference>
<dbReference type="InterPro" id="IPR002146">
    <property type="entry name" value="ATP_synth_b/b'su_bac/chlpt"/>
</dbReference>
<dbReference type="InterPro" id="IPR050059">
    <property type="entry name" value="ATP_synthase_B_chain"/>
</dbReference>
<dbReference type="NCBIfam" id="NF009988">
    <property type="entry name" value="PRK13454.1"/>
    <property type="match status" value="1"/>
</dbReference>
<dbReference type="PANTHER" id="PTHR33445:SF1">
    <property type="entry name" value="ATP SYNTHASE SUBUNIT B"/>
    <property type="match status" value="1"/>
</dbReference>
<dbReference type="PANTHER" id="PTHR33445">
    <property type="entry name" value="ATP SYNTHASE SUBUNIT B', CHLOROPLASTIC"/>
    <property type="match status" value="1"/>
</dbReference>
<dbReference type="Pfam" id="PF00430">
    <property type="entry name" value="ATP-synt_B"/>
    <property type="match status" value="1"/>
</dbReference>
<feature type="chain" id="PRO_0000239038" description="ATP synthase subunit b'">
    <location>
        <begin position="1"/>
        <end position="186"/>
    </location>
</feature>
<feature type="transmembrane region" description="Helical" evidence="2">
    <location>
        <begin position="39"/>
        <end position="59"/>
    </location>
</feature>
<feature type="sequence conflict" description="In Ref. 2; AA sequence." evidence="5" ref="2">
    <original>A</original>
    <variation>G</variation>
    <location>
        <position position="2"/>
    </location>
</feature>
<feature type="sequence conflict" description="In Ref. 2; AA sequence." evidence="5" ref="2">
    <original>N</original>
    <variation>H</variation>
    <location>
        <position position="6"/>
    </location>
</feature>